<evidence type="ECO:0000255" key="1">
    <source>
        <dbReference type="HAMAP-Rule" id="MF_00539"/>
    </source>
</evidence>
<evidence type="ECO:0000256" key="2">
    <source>
        <dbReference type="SAM" id="MobiDB-lite"/>
    </source>
</evidence>
<evidence type="ECO:0000305" key="3"/>
<proteinExistence type="inferred from homology"/>
<keyword id="KW-1185">Reference proteome</keyword>
<keyword id="KW-0687">Ribonucleoprotein</keyword>
<keyword id="KW-0689">Ribosomal protein</keyword>
<protein>
    <recommendedName>
        <fullName evidence="1">Large ribosomal subunit protein bL27</fullName>
    </recommendedName>
    <alternativeName>
        <fullName evidence="3">50S ribosomal protein L27</fullName>
    </alternativeName>
</protein>
<sequence length="84" mass="9077">MAHKKAGGSTRNGRDSESKRLGVKRFGGESVLAGNIIVRQRGTKFHAGVNVGIGRDHTLFALTDGKVKFEVKGPNNRKFISIEA</sequence>
<feature type="chain" id="PRO_0000181161" description="Large ribosomal subunit protein bL27">
    <location>
        <begin position="1"/>
        <end position="84"/>
    </location>
</feature>
<feature type="region of interest" description="Disordered" evidence="2">
    <location>
        <begin position="1"/>
        <end position="22"/>
    </location>
</feature>
<reference key="1">
    <citation type="journal article" date="2002" name="Nat. Biotechnol.">
        <title>Genome sequence of the dissimilatory metal ion-reducing bacterium Shewanella oneidensis.</title>
        <authorList>
            <person name="Heidelberg J.F."/>
            <person name="Paulsen I.T."/>
            <person name="Nelson K.E."/>
            <person name="Gaidos E.J."/>
            <person name="Nelson W.C."/>
            <person name="Read T.D."/>
            <person name="Eisen J.A."/>
            <person name="Seshadri R."/>
            <person name="Ward N.L."/>
            <person name="Methe B.A."/>
            <person name="Clayton R.A."/>
            <person name="Meyer T."/>
            <person name="Tsapin A."/>
            <person name="Scott J."/>
            <person name="Beanan M.J."/>
            <person name="Brinkac L.M."/>
            <person name="Daugherty S.C."/>
            <person name="DeBoy R.T."/>
            <person name="Dodson R.J."/>
            <person name="Durkin A.S."/>
            <person name="Haft D.H."/>
            <person name="Kolonay J.F."/>
            <person name="Madupu R."/>
            <person name="Peterson J.D."/>
            <person name="Umayam L.A."/>
            <person name="White O."/>
            <person name="Wolf A.M."/>
            <person name="Vamathevan J.J."/>
            <person name="Weidman J.F."/>
            <person name="Impraim M."/>
            <person name="Lee K."/>
            <person name="Berry K.J."/>
            <person name="Lee C."/>
            <person name="Mueller J."/>
            <person name="Khouri H.M."/>
            <person name="Gill J."/>
            <person name="Utterback T.R."/>
            <person name="McDonald L.A."/>
            <person name="Feldblyum T.V."/>
            <person name="Smith H.O."/>
            <person name="Venter J.C."/>
            <person name="Nealson K.H."/>
            <person name="Fraser C.M."/>
        </authorList>
    </citation>
    <scope>NUCLEOTIDE SEQUENCE [LARGE SCALE GENOMIC DNA]</scope>
    <source>
        <strain>ATCC 700550 / JCM 31522 / CIP 106686 / LMG 19005 / NCIMB 14063 / MR-1</strain>
    </source>
</reference>
<name>RL27_SHEON</name>
<organism>
    <name type="scientific">Shewanella oneidensis (strain ATCC 700550 / JCM 31522 / CIP 106686 / LMG 19005 / NCIMB 14063 / MR-1)</name>
    <dbReference type="NCBI Taxonomy" id="211586"/>
    <lineage>
        <taxon>Bacteria</taxon>
        <taxon>Pseudomonadati</taxon>
        <taxon>Pseudomonadota</taxon>
        <taxon>Gammaproteobacteria</taxon>
        <taxon>Alteromonadales</taxon>
        <taxon>Shewanellaceae</taxon>
        <taxon>Shewanella</taxon>
    </lineage>
</organism>
<gene>
    <name evidence="1" type="primary">rpmA</name>
    <name type="ordered locus">SO_3651</name>
</gene>
<accession>Q8EB81</accession>
<dbReference type="EMBL" id="AE014299">
    <property type="protein sequence ID" value="AAN56637.1"/>
    <property type="molecule type" value="Genomic_DNA"/>
</dbReference>
<dbReference type="RefSeq" id="NP_719193.1">
    <property type="nucleotide sequence ID" value="NC_004347.2"/>
</dbReference>
<dbReference type="RefSeq" id="WP_007650346.1">
    <property type="nucleotide sequence ID" value="NZ_CP053946.1"/>
</dbReference>
<dbReference type="SMR" id="Q8EB81"/>
<dbReference type="STRING" id="211586.SO_3651"/>
<dbReference type="PaxDb" id="211586-SO_3651"/>
<dbReference type="GeneID" id="94729146"/>
<dbReference type="KEGG" id="son:SO_3651"/>
<dbReference type="PATRIC" id="fig|211586.12.peg.3539"/>
<dbReference type="eggNOG" id="COG0211">
    <property type="taxonomic scope" value="Bacteria"/>
</dbReference>
<dbReference type="HOGENOM" id="CLU_095424_4_1_6"/>
<dbReference type="OrthoDB" id="9803474at2"/>
<dbReference type="PhylomeDB" id="Q8EB81"/>
<dbReference type="BioCyc" id="SONE211586:G1GMP-3399-MONOMER"/>
<dbReference type="Proteomes" id="UP000008186">
    <property type="component" value="Chromosome"/>
</dbReference>
<dbReference type="GO" id="GO:0022625">
    <property type="term" value="C:cytosolic large ribosomal subunit"/>
    <property type="evidence" value="ECO:0000318"/>
    <property type="project" value="GO_Central"/>
</dbReference>
<dbReference type="GO" id="GO:0003735">
    <property type="term" value="F:structural constituent of ribosome"/>
    <property type="evidence" value="ECO:0000318"/>
    <property type="project" value="GO_Central"/>
</dbReference>
<dbReference type="GO" id="GO:0006412">
    <property type="term" value="P:translation"/>
    <property type="evidence" value="ECO:0007669"/>
    <property type="project" value="UniProtKB-UniRule"/>
</dbReference>
<dbReference type="FunFam" id="2.40.50.100:FF:000001">
    <property type="entry name" value="50S ribosomal protein L27"/>
    <property type="match status" value="1"/>
</dbReference>
<dbReference type="Gene3D" id="2.40.50.100">
    <property type="match status" value="1"/>
</dbReference>
<dbReference type="HAMAP" id="MF_00539">
    <property type="entry name" value="Ribosomal_bL27"/>
    <property type="match status" value="1"/>
</dbReference>
<dbReference type="InterPro" id="IPR001684">
    <property type="entry name" value="Ribosomal_bL27"/>
</dbReference>
<dbReference type="InterPro" id="IPR018261">
    <property type="entry name" value="Ribosomal_bL27_CS"/>
</dbReference>
<dbReference type="NCBIfam" id="TIGR00062">
    <property type="entry name" value="L27"/>
    <property type="match status" value="1"/>
</dbReference>
<dbReference type="PANTHER" id="PTHR15893:SF0">
    <property type="entry name" value="LARGE RIBOSOMAL SUBUNIT PROTEIN BL27M"/>
    <property type="match status" value="1"/>
</dbReference>
<dbReference type="PANTHER" id="PTHR15893">
    <property type="entry name" value="RIBOSOMAL PROTEIN L27"/>
    <property type="match status" value="1"/>
</dbReference>
<dbReference type="Pfam" id="PF01016">
    <property type="entry name" value="Ribosomal_L27"/>
    <property type="match status" value="1"/>
</dbReference>
<dbReference type="PRINTS" id="PR00063">
    <property type="entry name" value="RIBOSOMALL27"/>
</dbReference>
<dbReference type="SUPFAM" id="SSF110324">
    <property type="entry name" value="Ribosomal L27 protein-like"/>
    <property type="match status" value="1"/>
</dbReference>
<dbReference type="PROSITE" id="PS00831">
    <property type="entry name" value="RIBOSOMAL_L27"/>
    <property type="match status" value="1"/>
</dbReference>
<comment type="similarity">
    <text evidence="1">Belongs to the bacterial ribosomal protein bL27 family.</text>
</comment>